<evidence type="ECO:0000305" key="1"/>
<protein>
    <recommendedName>
        <fullName>Uncharacterized protein MPN_374</fullName>
    </recommendedName>
</protein>
<dbReference type="EMBL" id="U00089">
    <property type="protein sequence ID" value="AAB96110.1"/>
    <property type="molecule type" value="Genomic_DNA"/>
</dbReference>
<dbReference type="PIR" id="S73788">
    <property type="entry name" value="S73788"/>
</dbReference>
<dbReference type="RefSeq" id="NP_110062.1">
    <property type="nucleotide sequence ID" value="NC_000912.1"/>
</dbReference>
<dbReference type="RefSeq" id="WP_010874730.1">
    <property type="nucleotide sequence ID" value="NZ_OU342337.1"/>
</dbReference>
<dbReference type="SMR" id="P75407"/>
<dbReference type="EnsemblBacteria" id="AAB96110">
    <property type="protein sequence ID" value="AAB96110"/>
    <property type="gene ID" value="MPN_374"/>
</dbReference>
<dbReference type="KEGG" id="mpn:MPN_374"/>
<dbReference type="PATRIC" id="fig|272634.6.peg.405"/>
<dbReference type="HOGENOM" id="CLU_1208727_0_0_14"/>
<dbReference type="BioCyc" id="MPNE272634:G1GJ3-589-MONOMER"/>
<dbReference type="Proteomes" id="UP000000808">
    <property type="component" value="Chromosome"/>
</dbReference>
<feature type="chain" id="PRO_0000210667" description="Uncharacterized protein MPN_374">
    <location>
        <begin position="1"/>
        <end position="229"/>
    </location>
</feature>
<name>Y374_MYCPN</name>
<sequence length="229" mass="26513">MKEVIDTNTTGTNFKFENRNYKLQNQSFSFVRYKNFNLDKLLIPKTNANLNSTRNGVLTQAPTLDFVLNPVFVNAITNVYNLSEQVKDLEQRLESKSNESEKAGINSVLTQIKNKQVDYLKVKEYISSLDKDTNKVSTPINSTGWVKWYQEANKELGLNLNQEPKDWDQFLKLVASYFSMAIYANVTLGQKVTKEVKVWDGQNFQFLAIENNEDQAQCFSKRKQSWNYC</sequence>
<comment type="similarity">
    <text evidence="1">To M.pneumoniae MPN_376 central region.</text>
</comment>
<accession>P75407</accession>
<gene>
    <name type="ordered locus">MPN_374</name>
    <name type="ORF">A19_orf229V</name>
    <name type="ORF">MP462</name>
</gene>
<reference key="1">
    <citation type="journal article" date="1996" name="Nucleic Acids Res.">
        <title>Complete sequence analysis of the genome of the bacterium Mycoplasma pneumoniae.</title>
        <authorList>
            <person name="Himmelreich R."/>
            <person name="Hilbert H."/>
            <person name="Plagens H."/>
            <person name="Pirkl E."/>
            <person name="Li B.-C."/>
            <person name="Herrmann R."/>
        </authorList>
    </citation>
    <scope>NUCLEOTIDE SEQUENCE [LARGE SCALE GENOMIC DNA]</scope>
    <source>
        <strain>ATCC 29342 / M129 / Subtype 1</strain>
    </source>
</reference>
<keyword id="KW-1185">Reference proteome</keyword>
<proteinExistence type="predicted"/>
<organism>
    <name type="scientific">Mycoplasma pneumoniae (strain ATCC 29342 / M129 / Subtype 1)</name>
    <name type="common">Mycoplasmoides pneumoniae</name>
    <dbReference type="NCBI Taxonomy" id="272634"/>
    <lineage>
        <taxon>Bacteria</taxon>
        <taxon>Bacillati</taxon>
        <taxon>Mycoplasmatota</taxon>
        <taxon>Mycoplasmoidales</taxon>
        <taxon>Mycoplasmoidaceae</taxon>
        <taxon>Mycoplasmoides</taxon>
    </lineage>
</organism>